<reference key="1">
    <citation type="journal article" date="1992" name="J. Bacteriol.">
        <title>Identification and molecular characterization of the acetyl coenzyme A synthetase gene (acoE) of Alcaligenes eutrophus.</title>
        <authorList>
            <person name="Priefert H."/>
            <person name="Steinbuechel A."/>
        </authorList>
    </citation>
    <scope>NUCLEOTIDE SEQUENCE [GENOMIC DNA]</scope>
    <scope>FUNCTION</scope>
    <scope>SUBSTRATE SPECIFICITY</scope>
</reference>
<reference key="2">
    <citation type="journal article" date="2006" name="Nat. Biotechnol.">
        <title>Genome sequence of the bioplastic-producing 'Knallgas' bacterium Ralstonia eutropha H16.</title>
        <authorList>
            <person name="Pohlmann A."/>
            <person name="Fricke W.F."/>
            <person name="Reinecke F."/>
            <person name="Kusian B."/>
            <person name="Liesegang H."/>
            <person name="Cramm R."/>
            <person name="Eitinger T."/>
            <person name="Ewering C."/>
            <person name="Poetter M."/>
            <person name="Schwartz E."/>
            <person name="Strittmatter A."/>
            <person name="Voss I."/>
            <person name="Gottschalk G."/>
            <person name="Steinbuechel A."/>
            <person name="Friedrich B."/>
            <person name="Bowien B."/>
        </authorList>
    </citation>
    <scope>NUCLEOTIDE SEQUENCE [LARGE SCALE GENOMIC DNA]</scope>
    <source>
        <strain>ATCC 17699 / DSM 428 / KCTC 22496 / NCIMB 10442 / H16 / Stanier 337</strain>
    </source>
</reference>
<gene>
    <name evidence="1" type="primary">acsA</name>
    <name type="synonym">acoE</name>
    <name type="ordered locus">H16_A2525</name>
</gene>
<evidence type="ECO:0000255" key="1">
    <source>
        <dbReference type="HAMAP-Rule" id="MF_01123"/>
    </source>
</evidence>
<evidence type="ECO:0000269" key="2">
    <source>
    </source>
</evidence>
<keyword id="KW-0007">Acetylation</keyword>
<keyword id="KW-0067">ATP-binding</keyword>
<keyword id="KW-0436">Ligase</keyword>
<keyword id="KW-0460">Magnesium</keyword>
<keyword id="KW-0479">Metal-binding</keyword>
<keyword id="KW-0547">Nucleotide-binding</keyword>
<keyword id="KW-1185">Reference proteome</keyword>
<dbReference type="EC" id="6.2.1.1" evidence="1"/>
<dbReference type="EMBL" id="M97217">
    <property type="protein sequence ID" value="AAA21945.1"/>
    <property type="molecule type" value="Genomic_DNA"/>
</dbReference>
<dbReference type="EMBL" id="AM260479">
    <property type="protein sequence ID" value="CAJ93612.1"/>
    <property type="molecule type" value="Genomic_DNA"/>
</dbReference>
<dbReference type="PIR" id="A45736">
    <property type="entry name" value="A45736"/>
</dbReference>
<dbReference type="RefSeq" id="WP_011615709.1">
    <property type="nucleotide sequence ID" value="NC_008313.1"/>
</dbReference>
<dbReference type="SMR" id="P31638"/>
<dbReference type="STRING" id="381666.H16_A2525"/>
<dbReference type="KEGG" id="reh:H16_A2525"/>
<dbReference type="PATRIC" id="fig|381666.6.peg.2916"/>
<dbReference type="eggNOG" id="COG0365">
    <property type="taxonomic scope" value="Bacteria"/>
</dbReference>
<dbReference type="HOGENOM" id="CLU_000022_3_6_4"/>
<dbReference type="OrthoDB" id="9766486at2"/>
<dbReference type="BioCyc" id="MetaCyc:MONOMER-13637"/>
<dbReference type="UniPathway" id="UPA00040"/>
<dbReference type="Proteomes" id="UP000008210">
    <property type="component" value="Chromosome 1"/>
</dbReference>
<dbReference type="GO" id="GO:0005829">
    <property type="term" value="C:cytosol"/>
    <property type="evidence" value="ECO:0007669"/>
    <property type="project" value="TreeGrafter"/>
</dbReference>
<dbReference type="GO" id="GO:0003987">
    <property type="term" value="F:acetate-CoA ligase activity"/>
    <property type="evidence" value="ECO:0007669"/>
    <property type="project" value="UniProtKB-UniRule"/>
</dbReference>
<dbReference type="GO" id="GO:0016208">
    <property type="term" value="F:AMP binding"/>
    <property type="evidence" value="ECO:0007669"/>
    <property type="project" value="InterPro"/>
</dbReference>
<dbReference type="GO" id="GO:0005524">
    <property type="term" value="F:ATP binding"/>
    <property type="evidence" value="ECO:0007669"/>
    <property type="project" value="UniProtKB-KW"/>
</dbReference>
<dbReference type="GO" id="GO:0046872">
    <property type="term" value="F:metal ion binding"/>
    <property type="evidence" value="ECO:0007669"/>
    <property type="project" value="UniProtKB-KW"/>
</dbReference>
<dbReference type="GO" id="GO:0045150">
    <property type="term" value="P:acetoin catabolic process"/>
    <property type="evidence" value="ECO:0007669"/>
    <property type="project" value="UniProtKB-UniPathway"/>
</dbReference>
<dbReference type="GO" id="GO:0019427">
    <property type="term" value="P:acetyl-CoA biosynthetic process from acetate"/>
    <property type="evidence" value="ECO:0007669"/>
    <property type="project" value="InterPro"/>
</dbReference>
<dbReference type="CDD" id="cd05966">
    <property type="entry name" value="ACS"/>
    <property type="match status" value="1"/>
</dbReference>
<dbReference type="FunFam" id="3.40.50.12780:FF:000001">
    <property type="entry name" value="Acetyl-coenzyme A synthetase"/>
    <property type="match status" value="1"/>
</dbReference>
<dbReference type="Gene3D" id="3.30.300.30">
    <property type="match status" value="1"/>
</dbReference>
<dbReference type="Gene3D" id="3.40.50.12780">
    <property type="entry name" value="N-terminal domain of ligase-like"/>
    <property type="match status" value="1"/>
</dbReference>
<dbReference type="HAMAP" id="MF_01123">
    <property type="entry name" value="Ac_CoA_synth"/>
    <property type="match status" value="1"/>
</dbReference>
<dbReference type="InterPro" id="IPR011904">
    <property type="entry name" value="Ac_CoA_lig"/>
</dbReference>
<dbReference type="InterPro" id="IPR032387">
    <property type="entry name" value="ACAS_N"/>
</dbReference>
<dbReference type="InterPro" id="IPR025110">
    <property type="entry name" value="AMP-bd_C"/>
</dbReference>
<dbReference type="InterPro" id="IPR045851">
    <property type="entry name" value="AMP-bd_C_sf"/>
</dbReference>
<dbReference type="InterPro" id="IPR020845">
    <property type="entry name" value="AMP-binding_CS"/>
</dbReference>
<dbReference type="InterPro" id="IPR000873">
    <property type="entry name" value="AMP-dep_synth/lig_dom"/>
</dbReference>
<dbReference type="InterPro" id="IPR042099">
    <property type="entry name" value="ANL_N_sf"/>
</dbReference>
<dbReference type="NCBIfam" id="TIGR02188">
    <property type="entry name" value="Ac_CoA_lig_AcsA"/>
    <property type="match status" value="1"/>
</dbReference>
<dbReference type="NCBIfam" id="NF001208">
    <property type="entry name" value="PRK00174.1"/>
    <property type="match status" value="1"/>
</dbReference>
<dbReference type="PANTHER" id="PTHR24095">
    <property type="entry name" value="ACETYL-COENZYME A SYNTHETASE"/>
    <property type="match status" value="1"/>
</dbReference>
<dbReference type="PANTHER" id="PTHR24095:SF14">
    <property type="entry name" value="ACETYL-COENZYME A SYNTHETASE 1"/>
    <property type="match status" value="1"/>
</dbReference>
<dbReference type="Pfam" id="PF16177">
    <property type="entry name" value="ACAS_N"/>
    <property type="match status" value="1"/>
</dbReference>
<dbReference type="Pfam" id="PF00501">
    <property type="entry name" value="AMP-binding"/>
    <property type="match status" value="1"/>
</dbReference>
<dbReference type="Pfam" id="PF13193">
    <property type="entry name" value="AMP-binding_C"/>
    <property type="match status" value="1"/>
</dbReference>
<dbReference type="SUPFAM" id="SSF56801">
    <property type="entry name" value="Acetyl-CoA synthetase-like"/>
    <property type="match status" value="1"/>
</dbReference>
<dbReference type="PROSITE" id="PS00455">
    <property type="entry name" value="AMP_BINDING"/>
    <property type="match status" value="1"/>
</dbReference>
<proteinExistence type="inferred from homology"/>
<feature type="chain" id="PRO_0000208353" description="Acetyl-coenzyme A synthetase">
    <location>
        <begin position="1"/>
        <end position="660"/>
    </location>
</feature>
<feature type="binding site" evidence="1">
    <location>
        <begin position="197"/>
        <end position="200"/>
    </location>
    <ligand>
        <name>CoA</name>
        <dbReference type="ChEBI" id="CHEBI:57287"/>
    </ligand>
</feature>
<feature type="binding site" evidence="1">
    <location>
        <position position="317"/>
    </location>
    <ligand>
        <name>CoA</name>
        <dbReference type="ChEBI" id="CHEBI:57287"/>
    </ligand>
</feature>
<feature type="binding site" evidence="1">
    <location>
        <begin position="397"/>
        <end position="399"/>
    </location>
    <ligand>
        <name>ATP</name>
        <dbReference type="ChEBI" id="CHEBI:30616"/>
    </ligand>
</feature>
<feature type="binding site" evidence="1">
    <location>
        <begin position="421"/>
        <end position="426"/>
    </location>
    <ligand>
        <name>ATP</name>
        <dbReference type="ChEBI" id="CHEBI:30616"/>
    </ligand>
</feature>
<feature type="binding site" evidence="1">
    <location>
        <position position="512"/>
    </location>
    <ligand>
        <name>ATP</name>
        <dbReference type="ChEBI" id="CHEBI:30616"/>
    </ligand>
</feature>
<feature type="binding site" evidence="1">
    <location>
        <position position="528"/>
    </location>
    <ligand>
        <name>ATP</name>
        <dbReference type="ChEBI" id="CHEBI:30616"/>
    </ligand>
</feature>
<feature type="binding site" evidence="1">
    <location>
        <position position="536"/>
    </location>
    <ligand>
        <name>CoA</name>
        <dbReference type="ChEBI" id="CHEBI:57287"/>
    </ligand>
</feature>
<feature type="binding site" evidence="1">
    <location>
        <position position="539"/>
    </location>
    <ligand>
        <name>ATP</name>
        <dbReference type="ChEBI" id="CHEBI:30616"/>
    </ligand>
</feature>
<feature type="binding site" evidence="1">
    <location>
        <position position="550"/>
    </location>
    <ligand>
        <name>Mg(2+)</name>
        <dbReference type="ChEBI" id="CHEBI:18420"/>
    </ligand>
</feature>
<feature type="binding site" evidence="1">
    <location>
        <position position="555"/>
    </location>
    <ligand>
        <name>Mg(2+)</name>
        <dbReference type="ChEBI" id="CHEBI:18420"/>
    </ligand>
</feature>
<feature type="modified residue" description="N6-acetyllysine" evidence="1">
    <location>
        <position position="625"/>
    </location>
</feature>
<accession>P31638</accession>
<accession>Q0K8Q9</accession>
<name>ACSA_CUPNH</name>
<comment type="function">
    <text evidence="1 2">Catalyzes the conversion of acetate into acetyl-CoA (AcCoA), an essential intermediate at the junction of anabolic and catabolic pathways. AcsA undergoes a two-step reaction. In the first half reaction, AcsA combines acetate with ATP to form acetyl-adenylate (AcAMP) intermediate. In the second half reaction, it can then transfer the acetyl group from AcAMP to the sulfhydryl group of CoA, forming the product AcCoA. Although acetate is the preferred substrate of AcsA, propionate is also used, but at a diminished rate compared with that of acetate. Fatty acids with more than three carbon atoms are usually not accepted as substrates by AcsA.</text>
</comment>
<comment type="catalytic activity">
    <reaction evidence="1">
        <text>acetate + ATP + CoA = acetyl-CoA + AMP + diphosphate</text>
        <dbReference type="Rhea" id="RHEA:23176"/>
        <dbReference type="ChEBI" id="CHEBI:30089"/>
        <dbReference type="ChEBI" id="CHEBI:30616"/>
        <dbReference type="ChEBI" id="CHEBI:33019"/>
        <dbReference type="ChEBI" id="CHEBI:57287"/>
        <dbReference type="ChEBI" id="CHEBI:57288"/>
        <dbReference type="ChEBI" id="CHEBI:456215"/>
        <dbReference type="EC" id="6.2.1.1"/>
    </reaction>
</comment>
<comment type="cofactor">
    <cofactor evidence="1">
        <name>Mg(2+)</name>
        <dbReference type="ChEBI" id="CHEBI:18420"/>
    </cofactor>
</comment>
<comment type="pathway">
    <text>Ketone degradation; acetoin degradation.</text>
</comment>
<comment type="PTM">
    <text evidence="1">Acetylated. Deacetylation by the SIR2-homolog deacetylase activates the enzyme.</text>
</comment>
<comment type="similarity">
    <text evidence="1">Belongs to the ATP-dependent AMP-binding enzyme family.</text>
</comment>
<organism>
    <name type="scientific">Cupriavidus necator (strain ATCC 17699 / DSM 428 / KCTC 22496 / NCIMB 10442 / H16 / Stanier 337)</name>
    <name type="common">Ralstonia eutropha</name>
    <dbReference type="NCBI Taxonomy" id="381666"/>
    <lineage>
        <taxon>Bacteria</taxon>
        <taxon>Pseudomonadati</taxon>
        <taxon>Pseudomonadota</taxon>
        <taxon>Betaproteobacteria</taxon>
        <taxon>Burkholderiales</taxon>
        <taxon>Burkholderiaceae</taxon>
        <taxon>Cupriavidus</taxon>
    </lineage>
</organism>
<sequence>MSAIESVMQEHRVFNPPEGFASQAAIPSMEAYQALCDEAERDYEGFWARHARELLHWTKPFTKVLDQSNAPFYKWFEDGELNASYNCLDRNLQNGNADKVAIVFEADDGSVTRVTYRELHGKVCRFANGLKALGIRKGDRVVIYMPMSVEGVVAMQACARLGATHSVVFGGFSAKSLQERLVDVGAVALITADEQMRGGKALPLKAIADDALALGGCEAVRNVIVYRRTGGKVAWTEGRDRWMEDVSAGQPDTCEAEPVSAEHPLFVLYTSGSTGKPKGVQHSTGGYLLWALMTMKWTFDIKPDDLFWCTADIGWVTGHTYIAYGPLAAGATQVVFEGVPTYPNAGRFWDMIARHKVSIFYTAPTAIRSLIKAAEADEKIHPKQYDLSSLRLLGTVGEPINPEAWMWYYKNIGNERCPIVDTFWQTETGGHMITPLPGATPLVPGSCTLPLPGIMAAIVDETGHDVPNGNGGILVVKRPWPAMIRTIWGDPERFRKSYFPEELGGKLYLAGDGSIRDKDTGYFTIMGRIDDVLNVSGHRMGTMEIESALVSNPLVAEAAVVGRPDDMTGEAICAFVVLKRSRPTGEEAVKIATELRNWVGKEIGPIAKPKDIRFGDNLPKTRSGKIMRRLLRSLAKGEEITQDTSTLENPAILEQLKQAQ</sequence>
<protein>
    <recommendedName>
        <fullName evidence="1">Acetyl-coenzyme A synthetase</fullName>
        <shortName evidence="1">AcCoA synthetase</shortName>
        <shortName evidence="1">Acs</shortName>
        <ecNumber evidence="1">6.2.1.1</ecNumber>
    </recommendedName>
    <alternativeName>
        <fullName evidence="1">Acetate--CoA ligase</fullName>
    </alternativeName>
    <alternativeName>
        <fullName evidence="1">Acyl-activating enzyme</fullName>
    </alternativeName>
</protein>